<protein>
    <recommendedName>
        <fullName evidence="1">Sulfate adenylyltransferase subunit 2</fullName>
        <ecNumber evidence="1">2.7.7.4</ecNumber>
    </recommendedName>
    <alternativeName>
        <fullName evidence="1">ATP-sulfurylase small subunit</fullName>
    </alternativeName>
    <alternativeName>
        <fullName evidence="1">Sulfate adenylate transferase</fullName>
        <shortName evidence="1">SAT</shortName>
    </alternativeName>
</protein>
<gene>
    <name evidence="1" type="primary">cysD</name>
    <name type="ordered locus">ECED1_3208</name>
</gene>
<evidence type="ECO:0000255" key="1">
    <source>
        <dbReference type="HAMAP-Rule" id="MF_00064"/>
    </source>
</evidence>
<sequence>MDQKRLTHLRQLEAESIHIIREVAAEFSNPVMLYSIGKDSSVMLHLARKAFYPGTLPFPLLHVDTGWKFREMYEFRDRTAKAYGCELLVHKNPEGVAMGINPFVHGSAKHTDIMKTEGLKQALNKYGFDAAFGGARRDEEKSRAKERIYSFRDRFHRWDPKNQRPELWHNYNGQINKGESIRVFPLSNWTEQDIWQYIWLENIDIVPLYLAAERPVLERDGMLMMIDDNRIDLQPGEVIKKRMVRFRTLGCWPLTGAVESNAQTLPEIIEEMLVSTTSERQGRVIDRDQAGSMELKKRQGYF</sequence>
<keyword id="KW-0067">ATP-binding</keyword>
<keyword id="KW-0547">Nucleotide-binding</keyword>
<keyword id="KW-0548">Nucleotidyltransferase</keyword>
<keyword id="KW-0808">Transferase</keyword>
<dbReference type="EC" id="2.7.7.4" evidence="1"/>
<dbReference type="EMBL" id="CU928162">
    <property type="protein sequence ID" value="CAR09370.2"/>
    <property type="molecule type" value="Genomic_DNA"/>
</dbReference>
<dbReference type="RefSeq" id="WP_000372392.1">
    <property type="nucleotide sequence ID" value="NC_011745.1"/>
</dbReference>
<dbReference type="SMR" id="B7MZ53"/>
<dbReference type="GeneID" id="89517568"/>
<dbReference type="KEGG" id="ecq:ECED1_3208"/>
<dbReference type="HOGENOM" id="CLU_043026_0_0_6"/>
<dbReference type="UniPathway" id="UPA00140">
    <property type="reaction ID" value="UER00204"/>
</dbReference>
<dbReference type="Proteomes" id="UP000000748">
    <property type="component" value="Chromosome"/>
</dbReference>
<dbReference type="GO" id="GO:0005524">
    <property type="term" value="F:ATP binding"/>
    <property type="evidence" value="ECO:0007669"/>
    <property type="project" value="UniProtKB-KW"/>
</dbReference>
<dbReference type="GO" id="GO:0004781">
    <property type="term" value="F:sulfate adenylyltransferase (ATP) activity"/>
    <property type="evidence" value="ECO:0007669"/>
    <property type="project" value="UniProtKB-UniRule"/>
</dbReference>
<dbReference type="GO" id="GO:0070814">
    <property type="term" value="P:hydrogen sulfide biosynthetic process"/>
    <property type="evidence" value="ECO:0007669"/>
    <property type="project" value="UniProtKB-UniRule"/>
</dbReference>
<dbReference type="GO" id="GO:0000103">
    <property type="term" value="P:sulfate assimilation"/>
    <property type="evidence" value="ECO:0007669"/>
    <property type="project" value="UniProtKB-UniRule"/>
</dbReference>
<dbReference type="CDD" id="cd23946">
    <property type="entry name" value="Sulfate_adenylyltransferase_2"/>
    <property type="match status" value="1"/>
</dbReference>
<dbReference type="FunFam" id="3.40.50.620:FF:000002">
    <property type="entry name" value="Sulfate adenylyltransferase subunit 2"/>
    <property type="match status" value="1"/>
</dbReference>
<dbReference type="Gene3D" id="3.40.50.620">
    <property type="entry name" value="HUPs"/>
    <property type="match status" value="1"/>
</dbReference>
<dbReference type="HAMAP" id="MF_00064">
    <property type="entry name" value="Sulf_adenylyltr_sub2"/>
    <property type="match status" value="1"/>
</dbReference>
<dbReference type="InterPro" id="IPR002500">
    <property type="entry name" value="PAPS_reduct_dom"/>
</dbReference>
<dbReference type="InterPro" id="IPR014729">
    <property type="entry name" value="Rossmann-like_a/b/a_fold"/>
</dbReference>
<dbReference type="InterPro" id="IPR011784">
    <property type="entry name" value="SO4_adenylTrfase_ssu"/>
</dbReference>
<dbReference type="InterPro" id="IPR050128">
    <property type="entry name" value="Sulfate_adenylyltrnsfr_sub2"/>
</dbReference>
<dbReference type="NCBIfam" id="TIGR02039">
    <property type="entry name" value="CysD"/>
    <property type="match status" value="1"/>
</dbReference>
<dbReference type="NCBIfam" id="NF003587">
    <property type="entry name" value="PRK05253.1"/>
    <property type="match status" value="1"/>
</dbReference>
<dbReference type="NCBIfam" id="NF009214">
    <property type="entry name" value="PRK12563.1"/>
    <property type="match status" value="1"/>
</dbReference>
<dbReference type="PANTHER" id="PTHR43196">
    <property type="entry name" value="SULFATE ADENYLYLTRANSFERASE SUBUNIT 2"/>
    <property type="match status" value="1"/>
</dbReference>
<dbReference type="PANTHER" id="PTHR43196:SF1">
    <property type="entry name" value="SULFATE ADENYLYLTRANSFERASE SUBUNIT 2"/>
    <property type="match status" value="1"/>
</dbReference>
<dbReference type="Pfam" id="PF01507">
    <property type="entry name" value="PAPS_reduct"/>
    <property type="match status" value="1"/>
</dbReference>
<dbReference type="PIRSF" id="PIRSF002936">
    <property type="entry name" value="CysDAde_trans"/>
    <property type="match status" value="1"/>
</dbReference>
<dbReference type="SUPFAM" id="SSF52402">
    <property type="entry name" value="Adenine nucleotide alpha hydrolases-like"/>
    <property type="match status" value="1"/>
</dbReference>
<organism>
    <name type="scientific">Escherichia coli O81 (strain ED1a)</name>
    <dbReference type="NCBI Taxonomy" id="585397"/>
    <lineage>
        <taxon>Bacteria</taxon>
        <taxon>Pseudomonadati</taxon>
        <taxon>Pseudomonadota</taxon>
        <taxon>Gammaproteobacteria</taxon>
        <taxon>Enterobacterales</taxon>
        <taxon>Enterobacteriaceae</taxon>
        <taxon>Escherichia</taxon>
    </lineage>
</organism>
<accession>B7MZ53</accession>
<comment type="function">
    <text evidence="1">With CysN forms the ATP sulfurylase (ATPS) that catalyzes the adenylation of sulfate producing adenosine 5'-phosphosulfate (APS) and diphosphate, the first enzymatic step in sulfur assimilation pathway. APS synthesis involves the formation of a high-energy phosphoric-sulfuric acid anhydride bond driven by GTP hydrolysis by CysN coupled to ATP hydrolysis by CysD.</text>
</comment>
<comment type="catalytic activity">
    <reaction evidence="1">
        <text>sulfate + ATP + H(+) = adenosine 5'-phosphosulfate + diphosphate</text>
        <dbReference type="Rhea" id="RHEA:18133"/>
        <dbReference type="ChEBI" id="CHEBI:15378"/>
        <dbReference type="ChEBI" id="CHEBI:16189"/>
        <dbReference type="ChEBI" id="CHEBI:30616"/>
        <dbReference type="ChEBI" id="CHEBI:33019"/>
        <dbReference type="ChEBI" id="CHEBI:58243"/>
        <dbReference type="EC" id="2.7.7.4"/>
    </reaction>
</comment>
<comment type="pathway">
    <text evidence="1">Sulfur metabolism; hydrogen sulfide biosynthesis; sulfite from sulfate: step 1/3.</text>
</comment>
<comment type="subunit">
    <text evidence="1">Heterodimer composed of CysD, the smaller subunit, and CysN.</text>
</comment>
<comment type="similarity">
    <text evidence="1">Belongs to the PAPS reductase family. CysD subfamily.</text>
</comment>
<proteinExistence type="inferred from homology"/>
<name>CYSD_ECO81</name>
<reference key="1">
    <citation type="journal article" date="2009" name="PLoS Genet.">
        <title>Organised genome dynamics in the Escherichia coli species results in highly diverse adaptive paths.</title>
        <authorList>
            <person name="Touchon M."/>
            <person name="Hoede C."/>
            <person name="Tenaillon O."/>
            <person name="Barbe V."/>
            <person name="Baeriswyl S."/>
            <person name="Bidet P."/>
            <person name="Bingen E."/>
            <person name="Bonacorsi S."/>
            <person name="Bouchier C."/>
            <person name="Bouvet O."/>
            <person name="Calteau A."/>
            <person name="Chiapello H."/>
            <person name="Clermont O."/>
            <person name="Cruveiller S."/>
            <person name="Danchin A."/>
            <person name="Diard M."/>
            <person name="Dossat C."/>
            <person name="Karoui M.E."/>
            <person name="Frapy E."/>
            <person name="Garry L."/>
            <person name="Ghigo J.M."/>
            <person name="Gilles A.M."/>
            <person name="Johnson J."/>
            <person name="Le Bouguenec C."/>
            <person name="Lescat M."/>
            <person name="Mangenot S."/>
            <person name="Martinez-Jehanne V."/>
            <person name="Matic I."/>
            <person name="Nassif X."/>
            <person name="Oztas S."/>
            <person name="Petit M.A."/>
            <person name="Pichon C."/>
            <person name="Rouy Z."/>
            <person name="Ruf C.S."/>
            <person name="Schneider D."/>
            <person name="Tourret J."/>
            <person name="Vacherie B."/>
            <person name="Vallenet D."/>
            <person name="Medigue C."/>
            <person name="Rocha E.P.C."/>
            <person name="Denamur E."/>
        </authorList>
    </citation>
    <scope>NUCLEOTIDE SEQUENCE [LARGE SCALE GENOMIC DNA]</scope>
    <source>
        <strain>ED1a</strain>
    </source>
</reference>
<feature type="chain" id="PRO_1000117941" description="Sulfate adenylyltransferase subunit 2">
    <location>
        <begin position="1"/>
        <end position="302"/>
    </location>
</feature>